<gene>
    <name type="primary">BMY1</name>
</gene>
<accession>O64407</accession>
<name>AMYB_VIGUN</name>
<evidence type="ECO:0000250" key="1">
    <source>
        <dbReference type="UniProtKB" id="P10538"/>
    </source>
</evidence>
<evidence type="ECO:0000255" key="2">
    <source>
        <dbReference type="PROSITE-ProRule" id="PRU10050"/>
    </source>
</evidence>
<evidence type="ECO:0000305" key="3"/>
<sequence>MASLDKNMLLNYVPVYVMLPLGVVSVNNVFEDPEGLKEQLVQLREAGVDGVMVDVWWGIIEQKGPKQYDWSAYKSLFQLVQECGLKLQAIMSFHQCGGNVGDVVNIPIPQWVLDIGESDPDIFYTNRSGTRDKEYLTIGVDNKPIFHGRTAIEVYSDYMKSFRENMSDFLKSEVIIDIEVGLGPAGELRYPSYPQNQGWVFPGIGEFQCYDKYLKAEFKAAAARAGHSEWELPDDAGTYNDVPESTEFFKTNGTYLTEKGKFFLTWYSNQLLNHGDEILDEANKAFLGCKVNLAIKVSGIHWWYKAQNHAAELTAGYYNLDDRDGYRPIAKMVSRHHASLNFTCLEMRDSEQSSDAQSGPQELVQQVLSGGWRENIEVAGENALSRYDATAYNQIILNARPQGVNKDGPPKHRMYGVTYLRLSDELLQQSNFDIFKKFVVKMHADQDYCEDPQEYNHGIPPLKRSEPKIPVDVLNEATKPIPPFPWDSETDMKVDG</sequence>
<keyword id="KW-0119">Carbohydrate metabolism</keyword>
<keyword id="KW-0326">Glycosidase</keyword>
<keyword id="KW-0378">Hydrolase</keyword>
<keyword id="KW-0624">Polysaccharide degradation</keyword>
<comment type="catalytic activity">
    <reaction>
        <text>Hydrolysis of (1-&gt;4)-alpha-D-glucosidic linkages in polysaccharides so as to remove successive maltose units from the non-reducing ends of the chains.</text>
        <dbReference type="EC" id="3.2.1.2"/>
    </reaction>
</comment>
<comment type="similarity">
    <text evidence="3">Belongs to the glycosyl hydrolase 14 family.</text>
</comment>
<dbReference type="EC" id="3.2.1.2"/>
<dbReference type="EMBL" id="AJ225087">
    <property type="protein sequence ID" value="CAA12395.1"/>
    <property type="molecule type" value="mRNA"/>
</dbReference>
<dbReference type="PIR" id="T11575">
    <property type="entry name" value="T11575"/>
</dbReference>
<dbReference type="SMR" id="O64407"/>
<dbReference type="CAZy" id="GH14">
    <property type="family name" value="Glycoside Hydrolase Family 14"/>
</dbReference>
<dbReference type="GO" id="GO:0016161">
    <property type="term" value="F:beta-amylase activity"/>
    <property type="evidence" value="ECO:0007669"/>
    <property type="project" value="UniProtKB-EC"/>
</dbReference>
<dbReference type="GO" id="GO:0000272">
    <property type="term" value="P:polysaccharide catabolic process"/>
    <property type="evidence" value="ECO:0007669"/>
    <property type="project" value="UniProtKB-KW"/>
</dbReference>
<dbReference type="FunFam" id="3.20.20.80:FF:000066">
    <property type="entry name" value="Beta-amylase"/>
    <property type="match status" value="1"/>
</dbReference>
<dbReference type="Gene3D" id="3.20.20.80">
    <property type="entry name" value="Glycosidases"/>
    <property type="match status" value="1"/>
</dbReference>
<dbReference type="InterPro" id="IPR001554">
    <property type="entry name" value="Glyco_hydro_14"/>
</dbReference>
<dbReference type="InterPro" id="IPR018238">
    <property type="entry name" value="Glyco_hydro_14_CS"/>
</dbReference>
<dbReference type="InterPro" id="IPR001371">
    <property type="entry name" value="Glyco_hydro_14B_pln"/>
</dbReference>
<dbReference type="InterPro" id="IPR017853">
    <property type="entry name" value="Glycoside_hydrolase_SF"/>
</dbReference>
<dbReference type="PANTHER" id="PTHR31352">
    <property type="entry name" value="BETA-AMYLASE 1, CHLOROPLASTIC"/>
    <property type="match status" value="1"/>
</dbReference>
<dbReference type="PANTHER" id="PTHR31352:SF40">
    <property type="entry name" value="BETA-AMYLASE 6"/>
    <property type="match status" value="1"/>
</dbReference>
<dbReference type="Pfam" id="PF01373">
    <property type="entry name" value="Glyco_hydro_14"/>
    <property type="match status" value="1"/>
</dbReference>
<dbReference type="PRINTS" id="PR00750">
    <property type="entry name" value="BETAAMYLASE"/>
</dbReference>
<dbReference type="PRINTS" id="PR00842">
    <property type="entry name" value="GLHYDLASE14B"/>
</dbReference>
<dbReference type="SUPFAM" id="SSF51445">
    <property type="entry name" value="(Trans)glycosidases"/>
    <property type="match status" value="1"/>
</dbReference>
<dbReference type="PROSITE" id="PS00506">
    <property type="entry name" value="BETA_AMYLASE_1"/>
    <property type="match status" value="1"/>
</dbReference>
<dbReference type="PROSITE" id="PS00679">
    <property type="entry name" value="BETA_AMYLASE_2"/>
    <property type="match status" value="1"/>
</dbReference>
<feature type="chain" id="PRO_0000153940" description="Beta-amylase">
    <location>
        <begin position="1"/>
        <end position="496"/>
    </location>
</feature>
<feature type="active site" description="Proton donor" evidence="2">
    <location>
        <position position="187"/>
    </location>
</feature>
<feature type="active site" description="Proton acceptor" evidence="1">
    <location>
        <position position="381"/>
    </location>
</feature>
<feature type="binding site" evidence="1">
    <location>
        <position position="54"/>
    </location>
    <ligand>
        <name>substrate</name>
    </ligand>
</feature>
<feature type="binding site" evidence="1">
    <location>
        <position position="94"/>
    </location>
    <ligand>
        <name>substrate</name>
    </ligand>
</feature>
<feature type="binding site" evidence="1">
    <location>
        <position position="102"/>
    </location>
    <ligand>
        <name>substrate</name>
    </ligand>
</feature>
<feature type="binding site" evidence="1">
    <location>
        <position position="296"/>
    </location>
    <ligand>
        <name>substrate</name>
    </ligand>
</feature>
<feature type="binding site" evidence="1">
    <location>
        <position position="301"/>
    </location>
    <ligand>
        <name>substrate</name>
    </ligand>
</feature>
<feature type="binding site" evidence="1">
    <location>
        <position position="343"/>
    </location>
    <ligand>
        <name>substrate</name>
    </ligand>
</feature>
<feature type="binding site" evidence="1">
    <location>
        <begin position="382"/>
        <end position="383"/>
    </location>
    <ligand>
        <name>substrate</name>
    </ligand>
</feature>
<feature type="binding site" evidence="1">
    <location>
        <position position="421"/>
    </location>
    <ligand>
        <name>substrate</name>
    </ligand>
</feature>
<proteinExistence type="evidence at transcript level"/>
<reference key="1">
    <citation type="submission" date="1998-03" db="EMBL/GenBank/DDBJ databases">
        <authorList>
            <person name="Bhullar S.S."/>
            <person name="Willmitzer L."/>
            <person name="Kossmann J."/>
        </authorList>
    </citation>
    <scope>NUCLEOTIDE SEQUENCE [MRNA]</scope>
    <source>
        <strain>cv. C-88</strain>
    </source>
</reference>
<protein>
    <recommendedName>
        <fullName>Beta-amylase</fullName>
        <ecNumber>3.2.1.2</ecNumber>
    </recommendedName>
    <alternativeName>
        <fullName>1,4-alpha-D-glucan maltohydrolase</fullName>
    </alternativeName>
</protein>
<organism>
    <name type="scientific">Vigna unguiculata</name>
    <name type="common">Cowpea</name>
    <dbReference type="NCBI Taxonomy" id="3917"/>
    <lineage>
        <taxon>Eukaryota</taxon>
        <taxon>Viridiplantae</taxon>
        <taxon>Streptophyta</taxon>
        <taxon>Embryophyta</taxon>
        <taxon>Tracheophyta</taxon>
        <taxon>Spermatophyta</taxon>
        <taxon>Magnoliopsida</taxon>
        <taxon>eudicotyledons</taxon>
        <taxon>Gunneridae</taxon>
        <taxon>Pentapetalae</taxon>
        <taxon>rosids</taxon>
        <taxon>fabids</taxon>
        <taxon>Fabales</taxon>
        <taxon>Fabaceae</taxon>
        <taxon>Papilionoideae</taxon>
        <taxon>50 kb inversion clade</taxon>
        <taxon>NPAAA clade</taxon>
        <taxon>indigoferoid/millettioid clade</taxon>
        <taxon>Phaseoleae</taxon>
        <taxon>Vigna</taxon>
    </lineage>
</organism>